<name>FLOWR_DROGR</name>
<dbReference type="EMBL" id="CH916366">
    <property type="protein sequence ID" value="EDV97836.1"/>
    <property type="status" value="ALT_SEQ"/>
    <property type="molecule type" value="Genomic_DNA"/>
</dbReference>
<dbReference type="RefSeq" id="XP_001985488.1">
    <property type="nucleotide sequence ID" value="XM_001985452.1"/>
</dbReference>
<dbReference type="FunCoup" id="B4J043">
    <property type="interactions" value="788"/>
</dbReference>
<dbReference type="EnsemblMetazoa" id="FBtr0459077">
    <property type="protein sequence ID" value="FBpp0409538"/>
    <property type="gene ID" value="FBgn0121950"/>
</dbReference>
<dbReference type="EnsemblMetazoa" id="XM_032741393.2">
    <property type="protein sequence ID" value="XP_032597284.1"/>
    <property type="gene ID" value="LOC6556781"/>
</dbReference>
<dbReference type="eggNOG" id="KOG4085">
    <property type="taxonomic scope" value="Eukaryota"/>
</dbReference>
<dbReference type="InParanoid" id="B4J043"/>
<dbReference type="OrthoDB" id="9934994at2759"/>
<dbReference type="Proteomes" id="UP000001070">
    <property type="component" value="Unassembled WGS sequence"/>
</dbReference>
<dbReference type="GO" id="GO:0042995">
    <property type="term" value="C:cell projection"/>
    <property type="evidence" value="ECO:0007669"/>
    <property type="project" value="UniProtKB-KW"/>
</dbReference>
<dbReference type="GO" id="GO:0005768">
    <property type="term" value="C:endosome"/>
    <property type="evidence" value="ECO:0007669"/>
    <property type="project" value="UniProtKB-SubCell"/>
</dbReference>
<dbReference type="GO" id="GO:0042734">
    <property type="term" value="C:presynaptic membrane"/>
    <property type="evidence" value="ECO:0007669"/>
    <property type="project" value="UniProtKB-SubCell"/>
</dbReference>
<dbReference type="GO" id="GO:0030672">
    <property type="term" value="C:synaptic vesicle membrane"/>
    <property type="evidence" value="ECO:0000250"/>
    <property type="project" value="UniProtKB"/>
</dbReference>
<dbReference type="GO" id="GO:0005262">
    <property type="term" value="F:calcium channel activity"/>
    <property type="evidence" value="ECO:0007669"/>
    <property type="project" value="UniProtKB-KW"/>
</dbReference>
<dbReference type="GO" id="GO:0042802">
    <property type="term" value="F:identical protein binding"/>
    <property type="evidence" value="ECO:0007669"/>
    <property type="project" value="EnsemblMetazoa"/>
</dbReference>
<dbReference type="GO" id="GO:0150008">
    <property type="term" value="P:bulk synaptic vesicle endocytosis"/>
    <property type="evidence" value="ECO:0007669"/>
    <property type="project" value="EnsemblMetazoa"/>
</dbReference>
<dbReference type="GO" id="GO:0035212">
    <property type="term" value="P:cell competition in a multicellular organism"/>
    <property type="evidence" value="ECO:0007669"/>
    <property type="project" value="EnsemblMetazoa"/>
</dbReference>
<dbReference type="GO" id="GO:0150007">
    <property type="term" value="P:clathrin-dependent synaptic vesicle endocytosis"/>
    <property type="evidence" value="ECO:0007669"/>
    <property type="project" value="EnsemblMetazoa"/>
</dbReference>
<dbReference type="GO" id="GO:0046530">
    <property type="term" value="P:photoreceptor cell differentiation"/>
    <property type="evidence" value="ECO:0000250"/>
    <property type="project" value="UniProtKB"/>
</dbReference>
<dbReference type="GO" id="GO:0043525">
    <property type="term" value="P:positive regulation of neuron apoptotic process"/>
    <property type="evidence" value="ECO:0007669"/>
    <property type="project" value="EnsemblMetazoa"/>
</dbReference>
<dbReference type="GO" id="GO:0099533">
    <property type="term" value="P:positive regulation of presynaptic cytosolic calcium concentration"/>
    <property type="evidence" value="ECO:0007669"/>
    <property type="project" value="EnsemblMetazoa"/>
</dbReference>
<dbReference type="GO" id="GO:0048488">
    <property type="term" value="P:synaptic vesicle endocytosis"/>
    <property type="evidence" value="ECO:0000250"/>
    <property type="project" value="UniProtKB"/>
</dbReference>
<dbReference type="InterPro" id="IPR019365">
    <property type="entry name" value="TVP18/Ca-channel_flower"/>
</dbReference>
<dbReference type="PANTHER" id="PTHR13314">
    <property type="entry name" value="CALCIUM CHANNEL FLOWER HOMOLOG"/>
    <property type="match status" value="1"/>
</dbReference>
<dbReference type="PANTHER" id="PTHR13314:SF2">
    <property type="entry name" value="CALCIUM CHANNEL FLOWER HOMOLOG"/>
    <property type="match status" value="1"/>
</dbReference>
<dbReference type="Pfam" id="PF10233">
    <property type="entry name" value="Cg6151-P"/>
    <property type="match status" value="1"/>
</dbReference>
<dbReference type="SMART" id="SM01077">
    <property type="entry name" value="Cg6151-P"/>
    <property type="match status" value="1"/>
</dbReference>
<evidence type="ECO:0000250" key="1">
    <source>
        <dbReference type="UniProtKB" id="Q95T12"/>
    </source>
</evidence>
<evidence type="ECO:0000255" key="2"/>
<evidence type="ECO:0000305" key="3"/>
<evidence type="ECO:0000312" key="4">
    <source>
        <dbReference type="EMBL" id="EDV97836.1"/>
    </source>
</evidence>
<accession>B4J043</accession>
<feature type="chain" id="PRO_0000389233" description="Calcium channel flower">
    <location>
        <begin position="1"/>
        <end position="196"/>
    </location>
</feature>
<feature type="transmembrane region" description="Helical" evidence="2">
    <location>
        <begin position="35"/>
        <end position="55"/>
    </location>
</feature>
<feature type="transmembrane region" description="Helical" evidence="2">
    <location>
        <begin position="70"/>
        <end position="92"/>
    </location>
</feature>
<feature type="transmembrane region" description="Helical" evidence="2">
    <location>
        <begin position="113"/>
        <end position="133"/>
    </location>
</feature>
<feature type="site" description="Calcium ion selectivity" evidence="1">
    <location>
        <position position="79"/>
    </location>
</feature>
<reference evidence="4" key="1">
    <citation type="journal article" date="2007" name="Nature">
        <title>Evolution of genes and genomes on the Drosophila phylogeny.</title>
        <authorList>
            <consortium name="Drosophila 12 genomes consortium"/>
        </authorList>
    </citation>
    <scope>NUCLEOTIDE SEQUENCE [LARGE SCALE GENOMIC DNA]</scope>
    <source>
        <strain evidence="4">Tucson 15287-2541.00</strain>
    </source>
</reference>
<organism>
    <name type="scientific">Drosophila grimshawi</name>
    <name type="common">Hawaiian fruit fly</name>
    <name type="synonym">Idiomyia grimshawi</name>
    <dbReference type="NCBI Taxonomy" id="7222"/>
    <lineage>
        <taxon>Eukaryota</taxon>
        <taxon>Metazoa</taxon>
        <taxon>Ecdysozoa</taxon>
        <taxon>Arthropoda</taxon>
        <taxon>Hexapoda</taxon>
        <taxon>Insecta</taxon>
        <taxon>Pterygota</taxon>
        <taxon>Neoptera</taxon>
        <taxon>Endopterygota</taxon>
        <taxon>Diptera</taxon>
        <taxon>Brachycera</taxon>
        <taxon>Muscomorpha</taxon>
        <taxon>Ephydroidea</taxon>
        <taxon>Drosophilidae</taxon>
        <taxon>Drosophila</taxon>
        <taxon>Hawaiian Drosophila</taxon>
    </lineage>
</organism>
<comment type="function">
    <text evidence="1">Transmembrane protein which mediates synaptic endocytosis, fitness-based cell culling, neuronal culling, morphogen gradient scaling, and calcium transport. Regulates synaptic endocytosis and hence couples exo- with endocytosis. Controls two major modes of synaptic vesicle (SV) endocytosis in the synaptic boutons of neuromuscular junctions (NMJs); Ca(2+) channel-independent Clathrin-mediated endocytosis (CME) in response to mild stimulation, and Ca(2+) channel-dependent activity-dependent bulk endocytosis (ADBE) in response to strong stimulation. Functions in ADBE and subsequent SV reformation from bulk endosomes by initiating Ca(2+) channel-dependent phosphatidylinositol 4,5-bisphosphate (PtdIns(4,5)P2) compartmentalization in synaptic boutons. There it acts at the periactive zone to provide the low Ca(2+) levels required to initiate Calcineurin activation and upregulate PtdIns(4,5)P2. Conversely PtdIns(4,5)P2 enhances fwe Ca(2+) channel-activity, establishing a positive feedback loop that induces PtdIns(4,5)P2 microdomain at the periactive zone. These microdomains trigger bulk membrane invagination (i.e. ADBE) by triggering actin polymerization while also promoting localization of fwe to bulk endosomes, thereby removing the ADBE trigger to reduce endocytosis and prevent excess membrane uptake. PtdIns(4,5)P2 then promotes SV reformation from the bulk endosomes, to coordinate ADBE and subsequent SV reformation. Different combinations of the flower isoforms at the cell membrane are also required for the identification and elimination of suboptimal or supernumerary cells during development, regeneration, and adulthood. Required for the recognition and elimination of unfit cells in the developing wing during cell competition. In the developing pupal retina, mediates the elimination of unwanted postmitotic neurons, including supernumerary photoreceptor neurons that form at the periphery of the retina and are contained within incomplete ommatidia units. Also required for efficient elimination and replacement of old neurons by newly generated neurons during regeneration in the adult brain following mechanical injury. Downstream of the flower fitness fingerprints, cells identified as unwanted or unfit are eliminated via apoptosis through the expression of ahuizotl (azot). However, the cells marked for elimination by the flower isoforms only undergo apoptosis if additional thresholds are met; (1) their neighboring fit/healthy cells express different levels of the fwe isoforms, and (2) the levels of the protective signal SPARC expressed by the loser or unwanted cells are unable to inhibit caspase activation. These additional thresholds for flower-mediated apoptosis, allows useful cells to recover from transient and limited stress before they are unnecessarily eliminated. Functions with dally and magu in a mechanism of scaling, which utilises apoptosis to ensure that the dpp morphogen gradient, which mediates organ growth, remains proportional to the size of the growing wing. In this mechanism, fwe represses dally- and Magu-dependent activity in expanding the gradient, and dally/Magu inhibits fwe-dependent apoptosis to keep cell death rate low. When the levels of these different proteins are optimally regulated the gradient correctly scales with organ growth but when this fails, fwe-mediated apoptosis is activated to trim the developing tissue to match the correct size of the gradient.</text>
</comment>
<comment type="activity regulation">
    <text evidence="1">Channel activity is inhibited by La(3+), which reduces Ca(2+) influx and thus inhibits it's function in promoting activity-dependent bulk endocytosis (ADBE) in response to high stimuli.</text>
</comment>
<comment type="subunit">
    <text evidence="1">Homomultimer. Associates with the dally/ magu complex.</text>
</comment>
<comment type="subcellular location">
    <subcellularLocation>
        <location evidence="2">Cell membrane</location>
        <topology evidence="2">Multi-pass membrane protein</topology>
    </subcellularLocation>
    <subcellularLocation>
        <location evidence="1">Cytoplasmic vesicle</location>
        <location evidence="1">Secretory vesicle</location>
        <location evidence="1">Synaptic vesicle membrane</location>
        <topology evidence="1">Multi-pass membrane protein</topology>
    </subcellularLocation>
    <subcellularLocation>
        <location evidence="1">Presynaptic cell membrane</location>
    </subcellularLocation>
    <subcellularLocation>
        <location evidence="1">Endosome</location>
    </subcellularLocation>
    <text evidence="1">Upon fusion of the synaptic vesicle (SV) with the presynaptic membrane, protein transfers from the SV to the periactive zones where endocytosis is known to occur. Upon high K(+) stimulation, expression levels in NMJ boutons are higher in bulk endosomes than in synaptic vesicles, suggesting that it is recycled to bulk endosomes after it activates ADBE.</text>
</comment>
<comment type="similarity">
    <text evidence="3">Belongs to the calcium channel flower family.</text>
</comment>
<comment type="sequence caution" evidence="3">
    <conflict type="erroneous gene model prediction">
        <sequence resource="EMBL-CDS" id="EDV97836"/>
    </conflict>
</comment>
<sequence>MSFAEKITGLLARPNQDPAGGPEAPWYLKYGSRVLGIVAAFFAILFGLWNVLSIIGLSVSCLVAGIIQMLAGFVVMALEAPCCFVCIEQVGSVADKVDAKPMYFRAGLYCAMAVPPIFMCFGLASLFGSGLIFATGAVYGMMALGKKASATDMRAAAQQSGYGGNATTSTTNDRAGIVNNAQPFSFTGAVGTDSNV</sequence>
<proteinExistence type="inferred from homology"/>
<protein>
    <recommendedName>
        <fullName evidence="1">Calcium channel flower</fullName>
    </recommendedName>
</protein>
<gene>
    <name evidence="1" type="primary">flower</name>
    <name type="ORF">GH14474</name>
</gene>
<keyword id="KW-0106">Calcium</keyword>
<keyword id="KW-0107">Calcium channel</keyword>
<keyword id="KW-0109">Calcium transport</keyword>
<keyword id="KW-1003">Cell membrane</keyword>
<keyword id="KW-0966">Cell projection</keyword>
<keyword id="KW-0968">Cytoplasmic vesicle</keyword>
<keyword id="KW-0254">Endocytosis</keyword>
<keyword id="KW-0967">Endosome</keyword>
<keyword id="KW-0407">Ion channel</keyword>
<keyword id="KW-0406">Ion transport</keyword>
<keyword id="KW-0472">Membrane</keyword>
<keyword id="KW-1185">Reference proteome</keyword>
<keyword id="KW-0770">Synapse</keyword>
<keyword id="KW-0812">Transmembrane</keyword>
<keyword id="KW-1133">Transmembrane helix</keyword>
<keyword id="KW-0813">Transport</keyword>